<reference key="1">
    <citation type="journal article" date="2002" name="Environ. Microbiol.">
        <title>Complete genome sequence and comparative analysis of the metabolically versatile Pseudomonas putida KT2440.</title>
        <authorList>
            <person name="Nelson K.E."/>
            <person name="Weinel C."/>
            <person name="Paulsen I.T."/>
            <person name="Dodson R.J."/>
            <person name="Hilbert H."/>
            <person name="Martins dos Santos V.A.P."/>
            <person name="Fouts D.E."/>
            <person name="Gill S.R."/>
            <person name="Pop M."/>
            <person name="Holmes M."/>
            <person name="Brinkac L.M."/>
            <person name="Beanan M.J."/>
            <person name="DeBoy R.T."/>
            <person name="Daugherty S.C."/>
            <person name="Kolonay J.F."/>
            <person name="Madupu R."/>
            <person name="Nelson W.C."/>
            <person name="White O."/>
            <person name="Peterson J.D."/>
            <person name="Khouri H.M."/>
            <person name="Hance I."/>
            <person name="Chris Lee P."/>
            <person name="Holtzapple E.K."/>
            <person name="Scanlan D."/>
            <person name="Tran K."/>
            <person name="Moazzez A."/>
            <person name="Utterback T.R."/>
            <person name="Rizzo M."/>
            <person name="Lee K."/>
            <person name="Kosack D."/>
            <person name="Moestl D."/>
            <person name="Wedler H."/>
            <person name="Lauber J."/>
            <person name="Stjepandic D."/>
            <person name="Hoheisel J."/>
            <person name="Straetz M."/>
            <person name="Heim S."/>
            <person name="Kiewitz C."/>
            <person name="Eisen J.A."/>
            <person name="Timmis K.N."/>
            <person name="Duesterhoeft A."/>
            <person name="Tuemmler B."/>
            <person name="Fraser C.M."/>
        </authorList>
    </citation>
    <scope>NUCLEOTIDE SEQUENCE [LARGE SCALE GENOMIC DNA]</scope>
    <source>
        <strain>ATCC 47054 / DSM 6125 / CFBP 8728 / NCIMB 11950 / KT2440</strain>
    </source>
</reference>
<gene>
    <name evidence="1" type="primary">pdxY</name>
    <name type="ordered locus">PP_5357</name>
</gene>
<protein>
    <recommendedName>
        <fullName evidence="1">Pyridoxal kinase PdxY</fullName>
        <shortName evidence="1">PL kinase</shortName>
        <ecNumber evidence="1">2.7.1.35</ecNumber>
    </recommendedName>
</protein>
<name>PDXY_PSEPK</name>
<organism>
    <name type="scientific">Pseudomonas putida (strain ATCC 47054 / DSM 6125 / CFBP 8728 / NCIMB 11950 / KT2440)</name>
    <dbReference type="NCBI Taxonomy" id="160488"/>
    <lineage>
        <taxon>Bacteria</taxon>
        <taxon>Pseudomonadati</taxon>
        <taxon>Pseudomonadota</taxon>
        <taxon>Gammaproteobacteria</taxon>
        <taxon>Pseudomonadales</taxon>
        <taxon>Pseudomonadaceae</taxon>
        <taxon>Pseudomonas</taxon>
    </lineage>
</organism>
<proteinExistence type="inferred from homology"/>
<dbReference type="EC" id="2.7.1.35" evidence="1"/>
<dbReference type="EMBL" id="AE015451">
    <property type="protein sequence ID" value="AAN70922.1"/>
    <property type="molecule type" value="Genomic_DNA"/>
</dbReference>
<dbReference type="RefSeq" id="NP_747458.1">
    <property type="nucleotide sequence ID" value="NC_002947.4"/>
</dbReference>
<dbReference type="RefSeq" id="WP_004575195.1">
    <property type="nucleotide sequence ID" value="NZ_CP169744.1"/>
</dbReference>
<dbReference type="SMR" id="Q88C26"/>
<dbReference type="STRING" id="160488.PP_5357"/>
<dbReference type="PaxDb" id="160488-PP_5357"/>
<dbReference type="GeneID" id="83683163"/>
<dbReference type="KEGG" id="ppu:PP_5357"/>
<dbReference type="PATRIC" id="fig|160488.4.peg.5711"/>
<dbReference type="eggNOG" id="COG2240">
    <property type="taxonomic scope" value="Bacteria"/>
</dbReference>
<dbReference type="HOGENOM" id="CLU_046496_3_0_6"/>
<dbReference type="OrthoDB" id="9800808at2"/>
<dbReference type="PhylomeDB" id="Q88C26"/>
<dbReference type="BioCyc" id="PPUT160488:G1G01-5713-MONOMER"/>
<dbReference type="UniPathway" id="UPA01068">
    <property type="reaction ID" value="UER00298"/>
</dbReference>
<dbReference type="Proteomes" id="UP000000556">
    <property type="component" value="Chromosome"/>
</dbReference>
<dbReference type="GO" id="GO:0005829">
    <property type="term" value="C:cytosol"/>
    <property type="evidence" value="ECO:0007669"/>
    <property type="project" value="TreeGrafter"/>
</dbReference>
<dbReference type="GO" id="GO:0005524">
    <property type="term" value="F:ATP binding"/>
    <property type="evidence" value="ECO:0007669"/>
    <property type="project" value="UniProtKB-UniRule"/>
</dbReference>
<dbReference type="GO" id="GO:0000287">
    <property type="term" value="F:magnesium ion binding"/>
    <property type="evidence" value="ECO:0007669"/>
    <property type="project" value="UniProtKB-UniRule"/>
</dbReference>
<dbReference type="GO" id="GO:0008478">
    <property type="term" value="F:pyridoxal kinase activity"/>
    <property type="evidence" value="ECO:0007669"/>
    <property type="project" value="UniProtKB-UniRule"/>
</dbReference>
<dbReference type="GO" id="GO:0009443">
    <property type="term" value="P:pyridoxal 5'-phosphate salvage"/>
    <property type="evidence" value="ECO:0007669"/>
    <property type="project" value="UniProtKB-UniRule"/>
</dbReference>
<dbReference type="CDD" id="cd01173">
    <property type="entry name" value="pyridoxal_pyridoxamine_kinase"/>
    <property type="match status" value="1"/>
</dbReference>
<dbReference type="FunFam" id="3.40.1190.20:FF:000008">
    <property type="entry name" value="Pyridoxal kinase PdxY"/>
    <property type="match status" value="1"/>
</dbReference>
<dbReference type="Gene3D" id="3.40.1190.20">
    <property type="match status" value="1"/>
</dbReference>
<dbReference type="HAMAP" id="MF_01639">
    <property type="entry name" value="PdxY"/>
    <property type="match status" value="1"/>
</dbReference>
<dbReference type="InterPro" id="IPR013749">
    <property type="entry name" value="PM/HMP-P_kinase-1"/>
</dbReference>
<dbReference type="InterPro" id="IPR004625">
    <property type="entry name" value="PyrdxlKinase"/>
</dbReference>
<dbReference type="InterPro" id="IPR023685">
    <property type="entry name" value="Pyridoxal_kinase_PdxY"/>
</dbReference>
<dbReference type="InterPro" id="IPR029056">
    <property type="entry name" value="Ribokinase-like"/>
</dbReference>
<dbReference type="NCBIfam" id="NF004398">
    <property type="entry name" value="PRK05756.1"/>
    <property type="match status" value="1"/>
</dbReference>
<dbReference type="NCBIfam" id="TIGR00687">
    <property type="entry name" value="pyridox_kin"/>
    <property type="match status" value="1"/>
</dbReference>
<dbReference type="PANTHER" id="PTHR10534">
    <property type="entry name" value="PYRIDOXAL KINASE"/>
    <property type="match status" value="1"/>
</dbReference>
<dbReference type="PANTHER" id="PTHR10534:SF2">
    <property type="entry name" value="PYRIDOXAL KINASE"/>
    <property type="match status" value="1"/>
</dbReference>
<dbReference type="Pfam" id="PF08543">
    <property type="entry name" value="Phos_pyr_kin"/>
    <property type="match status" value="1"/>
</dbReference>
<dbReference type="SUPFAM" id="SSF53613">
    <property type="entry name" value="Ribokinase-like"/>
    <property type="match status" value="1"/>
</dbReference>
<feature type="chain" id="PRO_0000269821" description="Pyridoxal kinase PdxY">
    <location>
        <begin position="1"/>
        <end position="290"/>
    </location>
</feature>
<feature type="binding site" evidence="1">
    <location>
        <position position="12"/>
    </location>
    <ligand>
        <name>substrate</name>
    </ligand>
</feature>
<feature type="binding site" evidence="1">
    <location>
        <begin position="47"/>
        <end position="48"/>
    </location>
    <ligand>
        <name>substrate</name>
    </ligand>
</feature>
<feature type="binding site" evidence="1">
    <location>
        <position position="114"/>
    </location>
    <ligand>
        <name>ATP</name>
        <dbReference type="ChEBI" id="CHEBI:30616"/>
    </ligand>
</feature>
<feature type="binding site" evidence="1">
    <location>
        <position position="151"/>
    </location>
    <ligand>
        <name>ATP</name>
        <dbReference type="ChEBI" id="CHEBI:30616"/>
    </ligand>
</feature>
<feature type="binding site" evidence="1">
    <location>
        <position position="184"/>
    </location>
    <ligand>
        <name>ATP</name>
        <dbReference type="ChEBI" id="CHEBI:30616"/>
    </ligand>
</feature>
<feature type="binding site" evidence="1">
    <location>
        <begin position="211"/>
        <end position="214"/>
    </location>
    <ligand>
        <name>ATP</name>
        <dbReference type="ChEBI" id="CHEBI:30616"/>
    </ligand>
</feature>
<feature type="binding site" evidence="1">
    <location>
        <position position="225"/>
    </location>
    <ligand>
        <name>substrate</name>
    </ligand>
</feature>
<comment type="function">
    <text evidence="1">Pyridoxal kinase involved in the salvage pathway of pyridoxal 5'-phosphate (PLP). Catalyzes the phosphorylation of pyridoxal to PLP.</text>
</comment>
<comment type="catalytic activity">
    <reaction evidence="1">
        <text>pyridoxal + ATP = pyridoxal 5'-phosphate + ADP + H(+)</text>
        <dbReference type="Rhea" id="RHEA:10224"/>
        <dbReference type="ChEBI" id="CHEBI:15378"/>
        <dbReference type="ChEBI" id="CHEBI:17310"/>
        <dbReference type="ChEBI" id="CHEBI:30616"/>
        <dbReference type="ChEBI" id="CHEBI:456216"/>
        <dbReference type="ChEBI" id="CHEBI:597326"/>
        <dbReference type="EC" id="2.7.1.35"/>
    </reaction>
</comment>
<comment type="cofactor">
    <cofactor evidence="1">
        <name>Mg(2+)</name>
        <dbReference type="ChEBI" id="CHEBI:18420"/>
    </cofactor>
</comment>
<comment type="pathway">
    <text evidence="1">Cofactor metabolism; pyridoxal 5'-phosphate salvage; pyridoxal 5'-phosphate from pyridoxal: step 1/1.</text>
</comment>
<comment type="subunit">
    <text evidence="1">Homodimer.</text>
</comment>
<comment type="similarity">
    <text evidence="1">Belongs to the pyridoxine kinase family. PdxY subfamily.</text>
</comment>
<evidence type="ECO:0000255" key="1">
    <source>
        <dbReference type="HAMAP-Rule" id="MF_01639"/>
    </source>
</evidence>
<keyword id="KW-0067">ATP-binding</keyword>
<keyword id="KW-0418">Kinase</keyword>
<keyword id="KW-0460">Magnesium</keyword>
<keyword id="KW-0547">Nucleotide-binding</keyword>
<keyword id="KW-1185">Reference proteome</keyword>
<keyword id="KW-0808">Transferase</keyword>
<sequence>MKRTPHLLAIQSHVVFGHAGNSAAVFPMQRIGVNAWPLNTVQFSNHTQYGQWAGEVLAPAQIPALVEGISNIGELGHCDAVLSGYLGSAEQGRAILAGVERIKAVNPKALYLCDPVMGHPEKGCIVPPEVSEFLLDEAAATADILCPNQLELDSFCGRRAQSLEDCVNMARSLLQRGPQVVLVKHLAYPGRAEEHFEMLLVTAEHSWHLRRPLLAFPRQPVGVGDLTSGLFLARVLLGDSWVQAFEFTAAAVHEVLLETQACASYELQLVRAQDRIAHPRVRFEAQLLAL</sequence>
<accession>Q88C26</accession>